<organism>
    <name type="scientific">Synechocystis sp. (strain ATCC 27184 / PCC 6803 / Kazusa)</name>
    <dbReference type="NCBI Taxonomy" id="1111708"/>
    <lineage>
        <taxon>Bacteria</taxon>
        <taxon>Bacillati</taxon>
        <taxon>Cyanobacteriota</taxon>
        <taxon>Cyanophyceae</taxon>
        <taxon>Synechococcales</taxon>
        <taxon>Merismopediaceae</taxon>
        <taxon>Synechocystis</taxon>
    </lineage>
</organism>
<comment type="function">
    <text evidence="1 3">Found at the monomer-monomer interface of the photosystem II (PS II) dimer, plays a role in assembly and dimerization of PSII. PSII is a light-driven water plastoquinone oxidoreductase, using light energy to abstract electrons from H(2)O, generating a proton gradient subsequently used for ATP formation.</text>
</comment>
<comment type="subunit">
    <text evidence="1 2 4">PSII is composed of 1 copy each of membrane proteins PsbA, PsbB, PsbC, PsbD, PsbE, PsbF, PsbH, PsbI, PsbJ, PsbK, PsbL, PsbM, PsbT, PsbX, PsbY, PsbZ, Psb30/Ycf12, peripheral proteins PsbO, CyanoQ (PsbQ), PsbU, PsbV and a large number of cofactors. It forms dimeric complexes.</text>
</comment>
<comment type="subcellular location">
    <subcellularLocation>
        <location evidence="1 2 4">Cellular thylakoid membrane</location>
        <topology evidence="1 4">Single-pass membrane protein</topology>
    </subcellularLocation>
</comment>
<comment type="disruption phenotype">
    <text evidence="3">Decreased photoautotrophic growth. Decreased assembly of PSII monomers and dimers, increased levels of the CP43-less intermediate, plus an altered dimeric form. Double psbM-psbT mutants do not assemble PSII dimers. Cells are light sensitive and rapidly photoinactivated; recovery requires protein synthesis and light.</text>
</comment>
<comment type="similarity">
    <text evidence="1">Belongs to the PsbT family.</text>
</comment>
<feature type="chain" id="PRO_0000218007" description="Photosystem II reaction center protein T">
    <location>
        <begin position="1"/>
        <end position="31"/>
    </location>
</feature>
<feature type="transmembrane region" description="Helical" evidence="1 4 5">
    <location>
        <begin position="3"/>
        <end position="23"/>
    </location>
</feature>
<feature type="modified residue" description="N-formylmethionine" evidence="4 5">
    <location>
        <position position="1"/>
    </location>
</feature>
<feature type="helix" evidence="8">
    <location>
        <begin position="2"/>
        <end position="22"/>
    </location>
</feature>
<sequence length="31" mass="3540">MESVAYILVLTMALAVLFFAIAFREPPRIEK</sequence>
<reference key="1">
    <citation type="journal article" date="1996" name="DNA Res.">
        <title>Sequence analysis of the genome of the unicellular cyanobacterium Synechocystis sp. strain PCC6803. II. Sequence determination of the entire genome and assignment of potential protein-coding regions.</title>
        <authorList>
            <person name="Kaneko T."/>
            <person name="Sato S."/>
            <person name="Kotani H."/>
            <person name="Tanaka A."/>
            <person name="Asamizu E."/>
            <person name="Nakamura Y."/>
            <person name="Miyajima N."/>
            <person name="Hirosawa M."/>
            <person name="Sugiura M."/>
            <person name="Sasamoto S."/>
            <person name="Kimura T."/>
            <person name="Hosouchi T."/>
            <person name="Matsuno A."/>
            <person name="Muraki A."/>
            <person name="Nakazaki N."/>
            <person name="Naruo K."/>
            <person name="Okumura S."/>
            <person name="Shimpo S."/>
            <person name="Takeuchi C."/>
            <person name="Wada T."/>
            <person name="Watanabe A."/>
            <person name="Yamada M."/>
            <person name="Yasuda M."/>
            <person name="Tabata S."/>
        </authorList>
    </citation>
    <scope>NUCLEOTIDE SEQUENCE [LARGE SCALE GENOMIC DNA]</scope>
    <source>
        <strain>ATCC 27184 / PCC 6803 / Kazusa</strain>
    </source>
</reference>
<reference key="2">
    <citation type="journal article" date="2002" name="Biochemistry">
        <title>Proteomic analysis of a highly active photosystem II preparation from the cyanobacterium Synechocystis sp. PCC 6803 reveals the presence of novel polypeptides.</title>
        <authorList>
            <person name="Kashino Y."/>
            <person name="Lauber W.M."/>
            <person name="Carroll J.A."/>
            <person name="Wang Q."/>
            <person name="Whitmarsh J."/>
            <person name="Satoh K."/>
            <person name="Pakrasi H.B."/>
        </authorList>
    </citation>
    <scope>PROTEIN SEQUENCE OF 1-10</scope>
    <scope>SUBUNIT</scope>
    <scope>SUBCELLULAR LOCATION</scope>
    <source>
        <strain>ATCC 27184 / PCC 6803 / Kazusa</strain>
    </source>
</reference>
<reference key="3">
    <citation type="journal article" date="2008" name="Biochemistry">
        <title>Effects of inactivating psbM and psbT on photodamage and assembly of photosystem II in Synechocystis sp. PCC 6803.</title>
        <authorList>
            <person name="Bentley F.K."/>
            <person name="Luo H."/>
            <person name="Dilbeck P."/>
            <person name="Burnap R.L."/>
            <person name="Eaton-Rye J.J."/>
        </authorList>
    </citation>
    <scope>FUNCTION</scope>
    <scope>DISRUPTION PHENOTYPE</scope>
    <source>
        <strain>ATCC 27184 / PCC 6803 / Kazusa</strain>
    </source>
</reference>
<reference evidence="6 7" key="4">
    <citation type="journal article" date="2022" name="Proc. Natl. Acad. Sci. U.S.A.">
        <title>High-resolution cryo-electron microscopy structure of photosystem II from the mesophilic cyanobacterium, Synechocystis sp. PCC 6803.</title>
        <authorList>
            <person name="Gisriel C.J."/>
            <person name="Wang J."/>
            <person name="Liu J."/>
            <person name="Flesher D.A."/>
            <person name="Reiss K.M."/>
            <person name="Huang H.L."/>
            <person name="Yang K.R."/>
            <person name="Armstrong W.H."/>
            <person name="Gunner M.R."/>
            <person name="Batista V.S."/>
            <person name="Debus R.J."/>
            <person name="Brudvig G.W."/>
        </authorList>
    </citation>
    <scope>STRUCTURE BY ELECTRON MICROSCOPY (1.93 ANGSTROMS) OF 1-30</scope>
    <scope>FUNCTION</scope>
    <scope>SUBUNIT</scope>
    <scope>SUBCELLULAR LOCATION</scope>
    <scope>FORMYLATION AT MET-1</scope>
    <source>
        <strain>ATCC 27184 / PCC 6803 / Kazusa</strain>
    </source>
</reference>
<dbReference type="EMBL" id="BA000022">
    <property type="protein sequence ID" value="BAA10133.1"/>
    <property type="molecule type" value="Genomic_DNA"/>
</dbReference>
<dbReference type="PIR" id="S76281">
    <property type="entry name" value="S76281"/>
</dbReference>
<dbReference type="PDB" id="6WJ6">
    <property type="method" value="EM"/>
    <property type="resolution" value="2.58 A"/>
    <property type="chains" value="T=1-31"/>
</dbReference>
<dbReference type="PDB" id="7N8O">
    <property type="method" value="EM"/>
    <property type="resolution" value="1.93 A"/>
    <property type="chains" value="T/t=1-30"/>
</dbReference>
<dbReference type="PDB" id="7RCV">
    <property type="method" value="EM"/>
    <property type="resolution" value="2.01 A"/>
    <property type="chains" value="T/t=1-30"/>
</dbReference>
<dbReference type="PDB" id="8TOW">
    <property type="method" value="EM"/>
    <property type="resolution" value="2.14 A"/>
    <property type="chains" value="T/t=1-31"/>
</dbReference>
<dbReference type="PDB" id="9EH5">
    <property type="method" value="EM"/>
    <property type="resolution" value="1.97 A"/>
    <property type="chains" value="T/t=1-31"/>
</dbReference>
<dbReference type="PDBsum" id="6WJ6"/>
<dbReference type="PDBsum" id="7N8O"/>
<dbReference type="PDBsum" id="7RCV"/>
<dbReference type="PDBsum" id="8TOW"/>
<dbReference type="PDBsum" id="9EH5"/>
<dbReference type="EMDB" id="EMD-21690"/>
<dbReference type="EMDB" id="EMD-24239"/>
<dbReference type="EMDB" id="EMD-24407"/>
<dbReference type="EMDB" id="EMD-41460"/>
<dbReference type="EMDB" id="EMD-48046"/>
<dbReference type="SMR" id="P74787"/>
<dbReference type="IntAct" id="P74787">
    <property type="interactions" value="5"/>
</dbReference>
<dbReference type="STRING" id="1148.gene:10499626"/>
<dbReference type="PaxDb" id="1148-1673336"/>
<dbReference type="EnsemblBacteria" id="BAA10133">
    <property type="protein sequence ID" value="BAA10133"/>
    <property type="gene ID" value="BAA10133"/>
</dbReference>
<dbReference type="KEGG" id="syn:smr0001"/>
<dbReference type="eggNOG" id="ENOG5033APQ">
    <property type="taxonomic scope" value="Bacteria"/>
</dbReference>
<dbReference type="InParanoid" id="P74787"/>
<dbReference type="Proteomes" id="UP000001425">
    <property type="component" value="Chromosome"/>
</dbReference>
<dbReference type="GO" id="GO:0009539">
    <property type="term" value="C:photosystem II reaction center"/>
    <property type="evidence" value="ECO:0007669"/>
    <property type="project" value="InterPro"/>
</dbReference>
<dbReference type="GO" id="GO:0031676">
    <property type="term" value="C:plasma membrane-derived thylakoid membrane"/>
    <property type="evidence" value="ECO:0007669"/>
    <property type="project" value="UniProtKB-SubCell"/>
</dbReference>
<dbReference type="GO" id="GO:0030096">
    <property type="term" value="C:plasma membrane-derived thylakoid photosystem II"/>
    <property type="evidence" value="ECO:0000314"/>
    <property type="project" value="UniProtKB"/>
</dbReference>
<dbReference type="GO" id="GO:0015979">
    <property type="term" value="P:photosynthesis"/>
    <property type="evidence" value="ECO:0007669"/>
    <property type="project" value="UniProtKB-UniRule"/>
</dbReference>
<dbReference type="HAMAP" id="MF_00808">
    <property type="entry name" value="PSII_PsbT"/>
    <property type="match status" value="1"/>
</dbReference>
<dbReference type="InterPro" id="IPR001743">
    <property type="entry name" value="PSII_PsbT"/>
</dbReference>
<dbReference type="InterPro" id="IPR037268">
    <property type="entry name" value="PSII_PsbT_sf"/>
</dbReference>
<dbReference type="NCBIfam" id="NF008825">
    <property type="entry name" value="PRK11875.1"/>
    <property type="match status" value="1"/>
</dbReference>
<dbReference type="PANTHER" id="PTHR36411">
    <property type="match status" value="1"/>
</dbReference>
<dbReference type="PANTHER" id="PTHR36411:SF2">
    <property type="entry name" value="PHOTOSYSTEM II REACTION CENTER PROTEIN T"/>
    <property type="match status" value="1"/>
</dbReference>
<dbReference type="Pfam" id="PF01405">
    <property type="entry name" value="PsbT"/>
    <property type="match status" value="1"/>
</dbReference>
<dbReference type="SUPFAM" id="SSF161029">
    <property type="entry name" value="Photosystem II reaction center protein T, PsbT"/>
    <property type="match status" value="1"/>
</dbReference>
<keyword id="KW-0002">3D-structure</keyword>
<keyword id="KW-0903">Direct protein sequencing</keyword>
<keyword id="KW-0291">Formylation</keyword>
<keyword id="KW-0472">Membrane</keyword>
<keyword id="KW-0602">Photosynthesis</keyword>
<keyword id="KW-0604">Photosystem II</keyword>
<keyword id="KW-1185">Reference proteome</keyword>
<keyword id="KW-0793">Thylakoid</keyword>
<keyword id="KW-0812">Transmembrane</keyword>
<keyword id="KW-1133">Transmembrane helix</keyword>
<name>PSBT_SYNY3</name>
<protein>
    <recommendedName>
        <fullName evidence="1">Photosystem II reaction center protein T</fullName>
        <shortName evidence="1">PSII-T</shortName>
    </recommendedName>
</protein>
<proteinExistence type="evidence at protein level"/>
<evidence type="ECO:0000255" key="1">
    <source>
        <dbReference type="HAMAP-Rule" id="MF_00808"/>
    </source>
</evidence>
<evidence type="ECO:0000269" key="2">
    <source>
    </source>
</evidence>
<evidence type="ECO:0000269" key="3">
    <source>
    </source>
</evidence>
<evidence type="ECO:0000269" key="4">
    <source>
    </source>
</evidence>
<evidence type="ECO:0000312" key="5">
    <source>
        <dbReference type="PDB" id="7N8O"/>
    </source>
</evidence>
<evidence type="ECO:0007744" key="6">
    <source>
        <dbReference type="PDB" id="7N8O"/>
    </source>
</evidence>
<evidence type="ECO:0007744" key="7">
    <source>
        <dbReference type="PDB" id="7RCV"/>
    </source>
</evidence>
<evidence type="ECO:0007829" key="8">
    <source>
        <dbReference type="PDB" id="7N8O"/>
    </source>
</evidence>
<gene>
    <name evidence="1" type="primary">psbT</name>
    <name type="ordered locus">smr0001</name>
</gene>
<accession>P74787</accession>